<name>GLMM_SINMW</name>
<proteinExistence type="inferred from homology"/>
<reference key="1">
    <citation type="submission" date="2007-06" db="EMBL/GenBank/DDBJ databases">
        <title>Complete sequence of Sinorhizobium medicae WSM419 chromosome.</title>
        <authorList>
            <consortium name="US DOE Joint Genome Institute"/>
            <person name="Copeland A."/>
            <person name="Lucas S."/>
            <person name="Lapidus A."/>
            <person name="Barry K."/>
            <person name="Glavina del Rio T."/>
            <person name="Dalin E."/>
            <person name="Tice H."/>
            <person name="Pitluck S."/>
            <person name="Chain P."/>
            <person name="Malfatti S."/>
            <person name="Shin M."/>
            <person name="Vergez L."/>
            <person name="Schmutz J."/>
            <person name="Larimer F."/>
            <person name="Land M."/>
            <person name="Hauser L."/>
            <person name="Kyrpides N."/>
            <person name="Mikhailova N."/>
            <person name="Reeve W.G."/>
            <person name="Richardson P."/>
        </authorList>
    </citation>
    <scope>NUCLEOTIDE SEQUENCE [LARGE SCALE GENOMIC DNA]</scope>
    <source>
        <strain>WSM419</strain>
    </source>
</reference>
<accession>A6UCS2</accession>
<protein>
    <recommendedName>
        <fullName evidence="1">Phosphoglucosamine mutase</fullName>
        <ecNumber evidence="1">5.4.2.10</ecNumber>
    </recommendedName>
</protein>
<organism>
    <name type="scientific">Sinorhizobium medicae (strain WSM419)</name>
    <name type="common">Ensifer medicae</name>
    <dbReference type="NCBI Taxonomy" id="366394"/>
    <lineage>
        <taxon>Bacteria</taxon>
        <taxon>Pseudomonadati</taxon>
        <taxon>Pseudomonadota</taxon>
        <taxon>Alphaproteobacteria</taxon>
        <taxon>Hyphomicrobiales</taxon>
        <taxon>Rhizobiaceae</taxon>
        <taxon>Sinorhizobium/Ensifer group</taxon>
        <taxon>Sinorhizobium</taxon>
    </lineage>
</organism>
<comment type="function">
    <text evidence="1">Catalyzes the conversion of glucosamine-6-phosphate to glucosamine-1-phosphate.</text>
</comment>
<comment type="catalytic activity">
    <reaction evidence="1">
        <text>alpha-D-glucosamine 1-phosphate = D-glucosamine 6-phosphate</text>
        <dbReference type="Rhea" id="RHEA:23424"/>
        <dbReference type="ChEBI" id="CHEBI:58516"/>
        <dbReference type="ChEBI" id="CHEBI:58725"/>
        <dbReference type="EC" id="5.4.2.10"/>
    </reaction>
</comment>
<comment type="cofactor">
    <cofactor evidence="1">
        <name>Mg(2+)</name>
        <dbReference type="ChEBI" id="CHEBI:18420"/>
    </cofactor>
    <text evidence="1">Binds 1 Mg(2+) ion per subunit.</text>
</comment>
<comment type="PTM">
    <text evidence="1">Activated by phosphorylation.</text>
</comment>
<comment type="similarity">
    <text evidence="1">Belongs to the phosphohexose mutase family.</text>
</comment>
<feature type="chain" id="PRO_1000068917" description="Phosphoglucosamine mutase">
    <location>
        <begin position="1"/>
        <end position="451"/>
    </location>
</feature>
<feature type="active site" description="Phosphoserine intermediate" evidence="1">
    <location>
        <position position="102"/>
    </location>
</feature>
<feature type="binding site" description="via phosphate group" evidence="1">
    <location>
        <position position="102"/>
    </location>
    <ligand>
        <name>Mg(2+)</name>
        <dbReference type="ChEBI" id="CHEBI:18420"/>
    </ligand>
</feature>
<feature type="binding site" evidence="1">
    <location>
        <position position="243"/>
    </location>
    <ligand>
        <name>Mg(2+)</name>
        <dbReference type="ChEBI" id="CHEBI:18420"/>
    </ligand>
</feature>
<feature type="binding site" evidence="1">
    <location>
        <position position="245"/>
    </location>
    <ligand>
        <name>Mg(2+)</name>
        <dbReference type="ChEBI" id="CHEBI:18420"/>
    </ligand>
</feature>
<feature type="binding site" evidence="1">
    <location>
        <position position="247"/>
    </location>
    <ligand>
        <name>Mg(2+)</name>
        <dbReference type="ChEBI" id="CHEBI:18420"/>
    </ligand>
</feature>
<feature type="modified residue" description="Phosphoserine" evidence="1">
    <location>
        <position position="102"/>
    </location>
</feature>
<evidence type="ECO:0000255" key="1">
    <source>
        <dbReference type="HAMAP-Rule" id="MF_01554"/>
    </source>
</evidence>
<keyword id="KW-0413">Isomerase</keyword>
<keyword id="KW-0460">Magnesium</keyword>
<keyword id="KW-0479">Metal-binding</keyword>
<keyword id="KW-0597">Phosphoprotein</keyword>
<sequence>MKRKYFGTDGIRGQSNIFPMTPDLAMRVGIAVGTIFRNGAHRHRVVIGKDTRLSGYMLENAMVAGFTAAGLDVFLLGPIPTPGVAMLTRSLRADIGVMISASHNAFRDNGIKLFGPDGYKLSDDIEEKIEELLDQDMTRQLAKPEDIGRAKRVDGDIYRYIEQAKRTLPRDVTLTGLRIAIDCANGAAYKVAPSALWELGAEVVPIGTEPNGVNINLECGSTHPAALQKKVHEVRADIGIALDGDADRVLIIDEEGQVIDGDQLMAVIADSWAADGMLKGGGIAATVMSNLGLERYLQARRLKLHRTKVGDRYVVEQMRQDGLNVGGEQSGHIVLSDFGTTGDGLVAALQILAVVKRQGKTVSEICRRFEPVPQVLKNVRISAGKPLEDAGVKQAIADAEAQLAKNGRLLIRPSGTEPLIRVMAEGDDRGKVERIVDELVSVIGAVRNAAA</sequence>
<dbReference type="EC" id="5.4.2.10" evidence="1"/>
<dbReference type="EMBL" id="CP000738">
    <property type="protein sequence ID" value="ABR61452.1"/>
    <property type="molecule type" value="Genomic_DNA"/>
</dbReference>
<dbReference type="RefSeq" id="WP_012066841.1">
    <property type="nucleotide sequence ID" value="NC_009636.1"/>
</dbReference>
<dbReference type="RefSeq" id="YP_001328287.1">
    <property type="nucleotide sequence ID" value="NC_009636.1"/>
</dbReference>
<dbReference type="SMR" id="A6UCS2"/>
<dbReference type="STRING" id="366394.Smed_2622"/>
<dbReference type="GeneID" id="61611848"/>
<dbReference type="KEGG" id="smd:Smed_2622"/>
<dbReference type="PATRIC" id="fig|366394.8.peg.5818"/>
<dbReference type="eggNOG" id="COG1109">
    <property type="taxonomic scope" value="Bacteria"/>
</dbReference>
<dbReference type="HOGENOM" id="CLU_016950_7_0_5"/>
<dbReference type="OrthoDB" id="9803322at2"/>
<dbReference type="Proteomes" id="UP000001108">
    <property type="component" value="Chromosome"/>
</dbReference>
<dbReference type="GO" id="GO:0005829">
    <property type="term" value="C:cytosol"/>
    <property type="evidence" value="ECO:0007669"/>
    <property type="project" value="TreeGrafter"/>
</dbReference>
<dbReference type="GO" id="GO:0000287">
    <property type="term" value="F:magnesium ion binding"/>
    <property type="evidence" value="ECO:0007669"/>
    <property type="project" value="UniProtKB-UniRule"/>
</dbReference>
<dbReference type="GO" id="GO:0008966">
    <property type="term" value="F:phosphoglucosamine mutase activity"/>
    <property type="evidence" value="ECO:0007669"/>
    <property type="project" value="UniProtKB-UniRule"/>
</dbReference>
<dbReference type="GO" id="GO:0004615">
    <property type="term" value="F:phosphomannomutase activity"/>
    <property type="evidence" value="ECO:0007669"/>
    <property type="project" value="TreeGrafter"/>
</dbReference>
<dbReference type="GO" id="GO:0005975">
    <property type="term" value="P:carbohydrate metabolic process"/>
    <property type="evidence" value="ECO:0007669"/>
    <property type="project" value="InterPro"/>
</dbReference>
<dbReference type="GO" id="GO:0009252">
    <property type="term" value="P:peptidoglycan biosynthetic process"/>
    <property type="evidence" value="ECO:0007669"/>
    <property type="project" value="TreeGrafter"/>
</dbReference>
<dbReference type="GO" id="GO:0006048">
    <property type="term" value="P:UDP-N-acetylglucosamine biosynthetic process"/>
    <property type="evidence" value="ECO:0007669"/>
    <property type="project" value="TreeGrafter"/>
</dbReference>
<dbReference type="CDD" id="cd05802">
    <property type="entry name" value="GlmM"/>
    <property type="match status" value="1"/>
</dbReference>
<dbReference type="FunFam" id="3.30.310.50:FF:000001">
    <property type="entry name" value="Phosphoglucosamine mutase"/>
    <property type="match status" value="1"/>
</dbReference>
<dbReference type="FunFam" id="3.40.120.10:FF:000001">
    <property type="entry name" value="Phosphoglucosamine mutase"/>
    <property type="match status" value="1"/>
</dbReference>
<dbReference type="FunFam" id="3.40.120.10:FF:000003">
    <property type="entry name" value="Phosphoglucosamine mutase"/>
    <property type="match status" value="1"/>
</dbReference>
<dbReference type="Gene3D" id="3.40.120.10">
    <property type="entry name" value="Alpha-D-Glucose-1,6-Bisphosphate, subunit A, domain 3"/>
    <property type="match status" value="3"/>
</dbReference>
<dbReference type="Gene3D" id="3.30.310.50">
    <property type="entry name" value="Alpha-D-phosphohexomutase, C-terminal domain"/>
    <property type="match status" value="1"/>
</dbReference>
<dbReference type="HAMAP" id="MF_01554_B">
    <property type="entry name" value="GlmM_B"/>
    <property type="match status" value="1"/>
</dbReference>
<dbReference type="InterPro" id="IPR005844">
    <property type="entry name" value="A-D-PHexomutase_a/b/a-I"/>
</dbReference>
<dbReference type="InterPro" id="IPR016055">
    <property type="entry name" value="A-D-PHexomutase_a/b/a-I/II/III"/>
</dbReference>
<dbReference type="InterPro" id="IPR005845">
    <property type="entry name" value="A-D-PHexomutase_a/b/a-II"/>
</dbReference>
<dbReference type="InterPro" id="IPR005846">
    <property type="entry name" value="A-D-PHexomutase_a/b/a-III"/>
</dbReference>
<dbReference type="InterPro" id="IPR005843">
    <property type="entry name" value="A-D-PHexomutase_C"/>
</dbReference>
<dbReference type="InterPro" id="IPR036900">
    <property type="entry name" value="A-D-PHexomutase_C_sf"/>
</dbReference>
<dbReference type="InterPro" id="IPR005841">
    <property type="entry name" value="Alpha-D-phosphohexomutase_SF"/>
</dbReference>
<dbReference type="InterPro" id="IPR006352">
    <property type="entry name" value="GlmM_bact"/>
</dbReference>
<dbReference type="InterPro" id="IPR050060">
    <property type="entry name" value="Phosphoglucosamine_mutase"/>
</dbReference>
<dbReference type="NCBIfam" id="TIGR01455">
    <property type="entry name" value="glmM"/>
    <property type="match status" value="1"/>
</dbReference>
<dbReference type="NCBIfam" id="NF008139">
    <property type="entry name" value="PRK10887.1"/>
    <property type="match status" value="1"/>
</dbReference>
<dbReference type="PANTHER" id="PTHR42946:SF1">
    <property type="entry name" value="PHOSPHOGLUCOMUTASE (ALPHA-D-GLUCOSE-1,6-BISPHOSPHATE-DEPENDENT)"/>
    <property type="match status" value="1"/>
</dbReference>
<dbReference type="PANTHER" id="PTHR42946">
    <property type="entry name" value="PHOSPHOHEXOSE MUTASE"/>
    <property type="match status" value="1"/>
</dbReference>
<dbReference type="Pfam" id="PF02878">
    <property type="entry name" value="PGM_PMM_I"/>
    <property type="match status" value="1"/>
</dbReference>
<dbReference type="Pfam" id="PF02879">
    <property type="entry name" value="PGM_PMM_II"/>
    <property type="match status" value="1"/>
</dbReference>
<dbReference type="Pfam" id="PF02880">
    <property type="entry name" value="PGM_PMM_III"/>
    <property type="match status" value="1"/>
</dbReference>
<dbReference type="Pfam" id="PF00408">
    <property type="entry name" value="PGM_PMM_IV"/>
    <property type="match status" value="1"/>
</dbReference>
<dbReference type="PRINTS" id="PR00509">
    <property type="entry name" value="PGMPMM"/>
</dbReference>
<dbReference type="SUPFAM" id="SSF55957">
    <property type="entry name" value="Phosphoglucomutase, C-terminal domain"/>
    <property type="match status" value="1"/>
</dbReference>
<dbReference type="SUPFAM" id="SSF53738">
    <property type="entry name" value="Phosphoglucomutase, first 3 domains"/>
    <property type="match status" value="3"/>
</dbReference>
<gene>
    <name evidence="1" type="primary">glmM</name>
    <name type="ordered locus">Smed_2622</name>
</gene>